<comment type="function">
    <text evidence="1">Catalyzes the isomerization of 5-dehydro-4-deoxy-D-glucuronate to 3-deoxy-D-glycero-2,5-hexodiulosonate.</text>
</comment>
<comment type="catalytic activity">
    <reaction evidence="1">
        <text>5-dehydro-4-deoxy-D-glucuronate = 3-deoxy-D-glycero-2,5-hexodiulosonate</text>
        <dbReference type="Rhea" id="RHEA:23896"/>
        <dbReference type="ChEBI" id="CHEBI:17117"/>
        <dbReference type="ChEBI" id="CHEBI:29071"/>
        <dbReference type="EC" id="5.3.1.17"/>
    </reaction>
</comment>
<comment type="cofactor">
    <cofactor evidence="1">
        <name>Zn(2+)</name>
        <dbReference type="ChEBI" id="CHEBI:29105"/>
    </cofactor>
    <text evidence="1">Binds 1 zinc ion per subunit.</text>
</comment>
<comment type="pathway">
    <text evidence="1">Glycan metabolism; pectin degradation; 2-dehydro-3-deoxy-D-gluconate from pectin: step 4/5.</text>
</comment>
<comment type="similarity">
    <text evidence="1">Belongs to the KduI family.</text>
</comment>
<reference key="1">
    <citation type="journal article" date="2001" name="Proc. Natl. Acad. Sci. U.S.A.">
        <title>Complete genome sequence of Caulobacter crescentus.</title>
        <authorList>
            <person name="Nierman W.C."/>
            <person name="Feldblyum T.V."/>
            <person name="Laub M.T."/>
            <person name="Paulsen I.T."/>
            <person name="Nelson K.E."/>
            <person name="Eisen J.A."/>
            <person name="Heidelberg J.F."/>
            <person name="Alley M.R.K."/>
            <person name="Ohta N."/>
            <person name="Maddock J.R."/>
            <person name="Potocka I."/>
            <person name="Nelson W.C."/>
            <person name="Newton A."/>
            <person name="Stephens C."/>
            <person name="Phadke N.D."/>
            <person name="Ely B."/>
            <person name="DeBoy R.T."/>
            <person name="Dodson R.J."/>
            <person name="Durkin A.S."/>
            <person name="Gwinn M.L."/>
            <person name="Haft D.H."/>
            <person name="Kolonay J.F."/>
            <person name="Smit J."/>
            <person name="Craven M.B."/>
            <person name="Khouri H.M."/>
            <person name="Shetty J."/>
            <person name="Berry K.J."/>
            <person name="Utterback T.R."/>
            <person name="Tran K."/>
            <person name="Wolf A.M."/>
            <person name="Vamathevan J.J."/>
            <person name="Ermolaeva M.D."/>
            <person name="White O."/>
            <person name="Salzberg S.L."/>
            <person name="Venter J.C."/>
            <person name="Shapiro L."/>
            <person name="Fraser C.M."/>
        </authorList>
    </citation>
    <scope>NUCLEOTIDE SEQUENCE [LARGE SCALE GENOMIC DNA]</scope>
    <source>
        <strain>ATCC 19089 / CIP 103742 / CB 15</strain>
    </source>
</reference>
<sequence length="279" mass="31050">MFAKTYHATHPDMMFAVSNDDLRDRYLMQGLFQDGQIVLTYNHAERFVVGGVVATSPIKLPDQTEPASAAGHPFLERRELGVINVGDTTGKITVDGVAYEIVPRDGLYVTMGAKDVTFEGVDGAARFYLVSLPAHAAFETKKLAFADAIPLERGALETSNERTIYQYIVPTTCKSAQLLLGMTVLKPGSVWNTMPPHLHDRRSEAYFYFGLGENDRVFHYMGEPDEMRHIVIANEEAVMSPPWSIHMGSGTANYTFIWAMGGENLDYTDMNVLDICQLK</sequence>
<evidence type="ECO:0000255" key="1">
    <source>
        <dbReference type="HAMAP-Rule" id="MF_00687"/>
    </source>
</evidence>
<proteinExistence type="inferred from homology"/>
<name>KDUI_CAUVC</name>
<keyword id="KW-0413">Isomerase</keyword>
<keyword id="KW-0479">Metal-binding</keyword>
<keyword id="KW-1185">Reference proteome</keyword>
<keyword id="KW-0862">Zinc</keyword>
<gene>
    <name evidence="1" type="primary">kduI</name>
    <name type="ordered locus">CC_1491</name>
</gene>
<feature type="chain" id="PRO_0000215484" description="4-deoxy-L-threo-5-hexosulose-uronate ketol-isomerase">
    <location>
        <begin position="1"/>
        <end position="279"/>
    </location>
</feature>
<feature type="binding site" evidence="1">
    <location>
        <position position="197"/>
    </location>
    <ligand>
        <name>Zn(2+)</name>
        <dbReference type="ChEBI" id="CHEBI:29105"/>
    </ligand>
</feature>
<feature type="binding site" evidence="1">
    <location>
        <position position="199"/>
    </location>
    <ligand>
        <name>Zn(2+)</name>
        <dbReference type="ChEBI" id="CHEBI:29105"/>
    </ligand>
</feature>
<feature type="binding site" evidence="1">
    <location>
        <position position="204"/>
    </location>
    <ligand>
        <name>Zn(2+)</name>
        <dbReference type="ChEBI" id="CHEBI:29105"/>
    </ligand>
</feature>
<feature type="binding site" evidence="1">
    <location>
        <position position="246"/>
    </location>
    <ligand>
        <name>Zn(2+)</name>
        <dbReference type="ChEBI" id="CHEBI:29105"/>
    </ligand>
</feature>
<dbReference type="EC" id="5.3.1.17" evidence="1"/>
<dbReference type="EMBL" id="AE005673">
    <property type="protein sequence ID" value="AAK23470.1"/>
    <property type="molecule type" value="Genomic_DNA"/>
</dbReference>
<dbReference type="PIR" id="B87434">
    <property type="entry name" value="B87434"/>
</dbReference>
<dbReference type="RefSeq" id="NP_420302.1">
    <property type="nucleotide sequence ID" value="NC_002696.2"/>
</dbReference>
<dbReference type="RefSeq" id="WP_010919365.1">
    <property type="nucleotide sequence ID" value="NC_002696.2"/>
</dbReference>
<dbReference type="SMR" id="Q9A873"/>
<dbReference type="STRING" id="190650.CC_1491"/>
<dbReference type="DNASU" id="941207"/>
<dbReference type="EnsemblBacteria" id="AAK23470">
    <property type="protein sequence ID" value="AAK23470"/>
    <property type="gene ID" value="CC_1491"/>
</dbReference>
<dbReference type="KEGG" id="ccr:CC_1491"/>
<dbReference type="PATRIC" id="fig|190650.5.peg.1518"/>
<dbReference type="eggNOG" id="COG3717">
    <property type="taxonomic scope" value="Bacteria"/>
</dbReference>
<dbReference type="HOGENOM" id="CLU_062609_0_0_5"/>
<dbReference type="BioCyc" id="CAULO:CC1491-MONOMER"/>
<dbReference type="UniPathway" id="UPA00545">
    <property type="reaction ID" value="UER00826"/>
</dbReference>
<dbReference type="Proteomes" id="UP000001816">
    <property type="component" value="Chromosome"/>
</dbReference>
<dbReference type="GO" id="GO:0008697">
    <property type="term" value="F:4-deoxy-L-threo-5-hexosulose-uronate ketol-isomerase activity"/>
    <property type="evidence" value="ECO:0007669"/>
    <property type="project" value="UniProtKB-UniRule"/>
</dbReference>
<dbReference type="GO" id="GO:0008270">
    <property type="term" value="F:zinc ion binding"/>
    <property type="evidence" value="ECO:0007669"/>
    <property type="project" value="UniProtKB-UniRule"/>
</dbReference>
<dbReference type="GO" id="GO:0019698">
    <property type="term" value="P:D-galacturonate catabolic process"/>
    <property type="evidence" value="ECO:0007669"/>
    <property type="project" value="TreeGrafter"/>
</dbReference>
<dbReference type="GO" id="GO:0042840">
    <property type="term" value="P:D-glucuronate catabolic process"/>
    <property type="evidence" value="ECO:0007669"/>
    <property type="project" value="TreeGrafter"/>
</dbReference>
<dbReference type="GO" id="GO:0045490">
    <property type="term" value="P:pectin catabolic process"/>
    <property type="evidence" value="ECO:0007669"/>
    <property type="project" value="UniProtKB-UniRule"/>
</dbReference>
<dbReference type="CDD" id="cd20491">
    <property type="entry name" value="cupin_KduI_C"/>
    <property type="match status" value="1"/>
</dbReference>
<dbReference type="CDD" id="cd20294">
    <property type="entry name" value="cupin_KduI_N"/>
    <property type="match status" value="1"/>
</dbReference>
<dbReference type="Gene3D" id="2.60.120.10">
    <property type="entry name" value="Jelly Rolls"/>
    <property type="match status" value="1"/>
</dbReference>
<dbReference type="Gene3D" id="2.60.120.520">
    <property type="entry name" value="pectin degrading enzyme 5-keto 4- deoxyuronate isomerase, domain 1"/>
    <property type="match status" value="1"/>
</dbReference>
<dbReference type="HAMAP" id="MF_00687">
    <property type="entry name" value="KduI"/>
    <property type="match status" value="1"/>
</dbReference>
<dbReference type="InterPro" id="IPR007045">
    <property type="entry name" value="KduI"/>
</dbReference>
<dbReference type="InterPro" id="IPR021120">
    <property type="entry name" value="KduI/IolB_isomerase"/>
</dbReference>
<dbReference type="InterPro" id="IPR027449">
    <property type="entry name" value="KduI_N"/>
</dbReference>
<dbReference type="InterPro" id="IPR014710">
    <property type="entry name" value="RmlC-like_jellyroll"/>
</dbReference>
<dbReference type="InterPro" id="IPR011051">
    <property type="entry name" value="RmlC_Cupin_sf"/>
</dbReference>
<dbReference type="NCBIfam" id="NF002091">
    <property type="entry name" value="PRK00924.1"/>
    <property type="match status" value="1"/>
</dbReference>
<dbReference type="PANTHER" id="PTHR38461">
    <property type="entry name" value="4-DEOXY-L-THREO-5-HEXOSULOSE-URONATE KETOL-ISOMERASE"/>
    <property type="match status" value="1"/>
</dbReference>
<dbReference type="PANTHER" id="PTHR38461:SF1">
    <property type="entry name" value="4-DEOXY-L-THREO-5-HEXOSULOSE-URONATE KETOL-ISOMERASE"/>
    <property type="match status" value="1"/>
</dbReference>
<dbReference type="Pfam" id="PF04962">
    <property type="entry name" value="KduI"/>
    <property type="match status" value="1"/>
</dbReference>
<dbReference type="PIRSF" id="PIRSF006625">
    <property type="entry name" value="KduI"/>
    <property type="match status" value="1"/>
</dbReference>
<dbReference type="SUPFAM" id="SSF51182">
    <property type="entry name" value="RmlC-like cupins"/>
    <property type="match status" value="1"/>
</dbReference>
<organism>
    <name type="scientific">Caulobacter vibrioides (strain ATCC 19089 / CIP 103742 / CB 15)</name>
    <name type="common">Caulobacter crescentus</name>
    <dbReference type="NCBI Taxonomy" id="190650"/>
    <lineage>
        <taxon>Bacteria</taxon>
        <taxon>Pseudomonadati</taxon>
        <taxon>Pseudomonadota</taxon>
        <taxon>Alphaproteobacteria</taxon>
        <taxon>Caulobacterales</taxon>
        <taxon>Caulobacteraceae</taxon>
        <taxon>Caulobacter</taxon>
    </lineage>
</organism>
<accession>Q9A873</accession>
<protein>
    <recommendedName>
        <fullName evidence="1">4-deoxy-L-threo-5-hexosulose-uronate ketol-isomerase</fullName>
        <ecNumber evidence="1">5.3.1.17</ecNumber>
    </recommendedName>
    <alternativeName>
        <fullName evidence="1">5-keto-4-deoxyuronate isomerase</fullName>
    </alternativeName>
    <alternativeName>
        <fullName evidence="1">DKI isomerase</fullName>
    </alternativeName>
</protein>